<proteinExistence type="evidence at protein level"/>
<evidence type="ECO:0000250" key="1"/>
<evidence type="ECO:0000250" key="2">
    <source>
        <dbReference type="UniProtKB" id="O75771"/>
    </source>
</evidence>
<evidence type="ECO:0000255" key="3"/>
<evidence type="ECO:0000269" key="4">
    <source>
    </source>
</evidence>
<evidence type="ECO:0000269" key="5">
    <source>
    </source>
</evidence>
<evidence type="ECO:0000269" key="6">
    <source>
    </source>
</evidence>
<evidence type="ECO:0000305" key="7"/>
<feature type="chain" id="PRO_0000122943" description="DNA repair protein RAD51 homolog 4">
    <location>
        <begin position="1"/>
        <end position="329"/>
    </location>
</feature>
<feature type="region of interest" description="preferentially binds ssDNA" evidence="1">
    <location>
        <begin position="1"/>
        <end position="83"/>
    </location>
</feature>
<feature type="region of interest" description="Interaction with XRCC2" evidence="5">
    <location>
        <begin position="4"/>
        <end position="77"/>
    </location>
</feature>
<feature type="region of interest" description="Interaction with RAD51C" evidence="5">
    <location>
        <begin position="77"/>
        <end position="328"/>
    </location>
</feature>
<feature type="binding site" evidence="3">
    <location>
        <begin position="107"/>
        <end position="114"/>
    </location>
    <ligand>
        <name>ATP</name>
        <dbReference type="ChEBI" id="CHEBI:30616"/>
    </ligand>
</feature>
<protein>
    <recommendedName>
        <fullName>DNA repair protein RAD51 homolog 4</fullName>
    </recommendedName>
    <alternativeName>
        <fullName>R51H3</fullName>
    </alternativeName>
    <alternativeName>
        <fullName>RAD51 homolog D</fullName>
    </alternativeName>
    <alternativeName>
        <fullName>RAD51-like protein 3</fullName>
    </alternativeName>
</protein>
<sequence length="329" mass="35260">MGMLRAGLCPGLTEETVQLLRGRKIKTVADLAAADLEEVAQKCGLSYKALVALRRVLLAQFSAFPLNGADLYEELKTSTAILSTGIGSLDKLLDAGLYTGEVTEIVGGPGSGKTQVCLCVAANVAHSLQQNVLYVDSNGGMTASRLLQLLQARTQDEEKQASALQRIQVVRSFDIFRMLDMLQDLRGTIAQQEATSSGAVKVVIVDSVTAVVAPLLGGQQREGLALMMQLARELKILARDLGVAVVVTNHLTRDWDGRRFKPALGRSWSFVPSTRILLDVTEGAGTLGSSQRTVCLTKSPRQPTGLQEMIDIGTLGTEEQSPELPGKQT</sequence>
<name>RA51D_MOUSE</name>
<organism>
    <name type="scientific">Mus musculus</name>
    <name type="common">Mouse</name>
    <dbReference type="NCBI Taxonomy" id="10090"/>
    <lineage>
        <taxon>Eukaryota</taxon>
        <taxon>Metazoa</taxon>
        <taxon>Chordata</taxon>
        <taxon>Craniata</taxon>
        <taxon>Vertebrata</taxon>
        <taxon>Euteleostomi</taxon>
        <taxon>Mammalia</taxon>
        <taxon>Eutheria</taxon>
        <taxon>Euarchontoglires</taxon>
        <taxon>Glires</taxon>
        <taxon>Rodentia</taxon>
        <taxon>Myomorpha</taxon>
        <taxon>Muroidea</taxon>
        <taxon>Muridae</taxon>
        <taxon>Murinae</taxon>
        <taxon>Mus</taxon>
        <taxon>Mus</taxon>
    </lineage>
</organism>
<reference key="1">
    <citation type="journal article" date="1998" name="Genomics">
        <title>Identification, characterization, and genetic mapping of Rad51d, a new mouse and human RAD51/RecA-related gene.</title>
        <authorList>
            <person name="Pittman D.L."/>
            <person name="Weinberg L.R."/>
            <person name="Schimenti J.C."/>
        </authorList>
    </citation>
    <scope>NUCLEOTIDE SEQUENCE [MRNA]</scope>
    <scope>ALTERNATIVE SPLICING</scope>
</reference>
<reference key="2">
    <citation type="journal article" date="1998" name="Nucleic Acids Res.">
        <title>Isolation of novel human and mouse genes of the recA/RAD51 recombination-repair gene family.</title>
        <authorList>
            <person name="Cartwright R."/>
            <person name="Dunn A.M."/>
            <person name="Simpson P.J."/>
            <person name="Tambini C.E."/>
            <person name="Thacker J."/>
        </authorList>
    </citation>
    <scope>NUCLEOTIDE SEQUENCE [MRNA]</scope>
</reference>
<reference key="3">
    <citation type="submission" date="1997-12" db="EMBL/GenBank/DDBJ databases">
        <authorList>
            <person name="Kawabata M."/>
        </authorList>
    </citation>
    <scope>NUCLEOTIDE SEQUENCE [MRNA]</scope>
</reference>
<reference key="4">
    <citation type="journal article" date="2005" name="Science">
        <title>The transcriptional landscape of the mammalian genome.</title>
        <authorList>
            <person name="Carninci P."/>
            <person name="Kasukawa T."/>
            <person name="Katayama S."/>
            <person name="Gough J."/>
            <person name="Frith M.C."/>
            <person name="Maeda N."/>
            <person name="Oyama R."/>
            <person name="Ravasi T."/>
            <person name="Lenhard B."/>
            <person name="Wells C."/>
            <person name="Kodzius R."/>
            <person name="Shimokawa K."/>
            <person name="Bajic V.B."/>
            <person name="Brenner S.E."/>
            <person name="Batalov S."/>
            <person name="Forrest A.R."/>
            <person name="Zavolan M."/>
            <person name="Davis M.J."/>
            <person name="Wilming L.G."/>
            <person name="Aidinis V."/>
            <person name="Allen J.E."/>
            <person name="Ambesi-Impiombato A."/>
            <person name="Apweiler R."/>
            <person name="Aturaliya R.N."/>
            <person name="Bailey T.L."/>
            <person name="Bansal M."/>
            <person name="Baxter L."/>
            <person name="Beisel K.W."/>
            <person name="Bersano T."/>
            <person name="Bono H."/>
            <person name="Chalk A.M."/>
            <person name="Chiu K.P."/>
            <person name="Choudhary V."/>
            <person name="Christoffels A."/>
            <person name="Clutterbuck D.R."/>
            <person name="Crowe M.L."/>
            <person name="Dalla E."/>
            <person name="Dalrymple B.P."/>
            <person name="de Bono B."/>
            <person name="Della Gatta G."/>
            <person name="di Bernardo D."/>
            <person name="Down T."/>
            <person name="Engstrom P."/>
            <person name="Fagiolini M."/>
            <person name="Faulkner G."/>
            <person name="Fletcher C.F."/>
            <person name="Fukushima T."/>
            <person name="Furuno M."/>
            <person name="Futaki S."/>
            <person name="Gariboldi M."/>
            <person name="Georgii-Hemming P."/>
            <person name="Gingeras T.R."/>
            <person name="Gojobori T."/>
            <person name="Green R.E."/>
            <person name="Gustincich S."/>
            <person name="Harbers M."/>
            <person name="Hayashi Y."/>
            <person name="Hensch T.K."/>
            <person name="Hirokawa N."/>
            <person name="Hill D."/>
            <person name="Huminiecki L."/>
            <person name="Iacono M."/>
            <person name="Ikeo K."/>
            <person name="Iwama A."/>
            <person name="Ishikawa T."/>
            <person name="Jakt M."/>
            <person name="Kanapin A."/>
            <person name="Katoh M."/>
            <person name="Kawasawa Y."/>
            <person name="Kelso J."/>
            <person name="Kitamura H."/>
            <person name="Kitano H."/>
            <person name="Kollias G."/>
            <person name="Krishnan S.P."/>
            <person name="Kruger A."/>
            <person name="Kummerfeld S.K."/>
            <person name="Kurochkin I.V."/>
            <person name="Lareau L.F."/>
            <person name="Lazarevic D."/>
            <person name="Lipovich L."/>
            <person name="Liu J."/>
            <person name="Liuni S."/>
            <person name="McWilliam S."/>
            <person name="Madan Babu M."/>
            <person name="Madera M."/>
            <person name="Marchionni L."/>
            <person name="Matsuda H."/>
            <person name="Matsuzawa S."/>
            <person name="Miki H."/>
            <person name="Mignone F."/>
            <person name="Miyake S."/>
            <person name="Morris K."/>
            <person name="Mottagui-Tabar S."/>
            <person name="Mulder N."/>
            <person name="Nakano N."/>
            <person name="Nakauchi H."/>
            <person name="Ng P."/>
            <person name="Nilsson R."/>
            <person name="Nishiguchi S."/>
            <person name="Nishikawa S."/>
            <person name="Nori F."/>
            <person name="Ohara O."/>
            <person name="Okazaki Y."/>
            <person name="Orlando V."/>
            <person name="Pang K.C."/>
            <person name="Pavan W.J."/>
            <person name="Pavesi G."/>
            <person name="Pesole G."/>
            <person name="Petrovsky N."/>
            <person name="Piazza S."/>
            <person name="Reed J."/>
            <person name="Reid J.F."/>
            <person name="Ring B.Z."/>
            <person name="Ringwald M."/>
            <person name="Rost B."/>
            <person name="Ruan Y."/>
            <person name="Salzberg S.L."/>
            <person name="Sandelin A."/>
            <person name="Schneider C."/>
            <person name="Schoenbach C."/>
            <person name="Sekiguchi K."/>
            <person name="Semple C.A."/>
            <person name="Seno S."/>
            <person name="Sessa L."/>
            <person name="Sheng Y."/>
            <person name="Shibata Y."/>
            <person name="Shimada H."/>
            <person name="Shimada K."/>
            <person name="Silva D."/>
            <person name="Sinclair B."/>
            <person name="Sperling S."/>
            <person name="Stupka E."/>
            <person name="Sugiura K."/>
            <person name="Sultana R."/>
            <person name="Takenaka Y."/>
            <person name="Taki K."/>
            <person name="Tammoja K."/>
            <person name="Tan S.L."/>
            <person name="Tang S."/>
            <person name="Taylor M.S."/>
            <person name="Tegner J."/>
            <person name="Teichmann S.A."/>
            <person name="Ueda H.R."/>
            <person name="van Nimwegen E."/>
            <person name="Verardo R."/>
            <person name="Wei C.L."/>
            <person name="Yagi K."/>
            <person name="Yamanishi H."/>
            <person name="Zabarovsky E."/>
            <person name="Zhu S."/>
            <person name="Zimmer A."/>
            <person name="Hide W."/>
            <person name="Bult C."/>
            <person name="Grimmond S.M."/>
            <person name="Teasdale R.D."/>
            <person name="Liu E.T."/>
            <person name="Brusic V."/>
            <person name="Quackenbush J."/>
            <person name="Wahlestedt C."/>
            <person name="Mattick J.S."/>
            <person name="Hume D.A."/>
            <person name="Kai C."/>
            <person name="Sasaki D."/>
            <person name="Tomaru Y."/>
            <person name="Fukuda S."/>
            <person name="Kanamori-Katayama M."/>
            <person name="Suzuki M."/>
            <person name="Aoki J."/>
            <person name="Arakawa T."/>
            <person name="Iida J."/>
            <person name="Imamura K."/>
            <person name="Itoh M."/>
            <person name="Kato T."/>
            <person name="Kawaji H."/>
            <person name="Kawagashira N."/>
            <person name="Kawashima T."/>
            <person name="Kojima M."/>
            <person name="Kondo S."/>
            <person name="Konno H."/>
            <person name="Nakano K."/>
            <person name="Ninomiya N."/>
            <person name="Nishio T."/>
            <person name="Okada M."/>
            <person name="Plessy C."/>
            <person name="Shibata K."/>
            <person name="Shiraki T."/>
            <person name="Suzuki S."/>
            <person name="Tagami M."/>
            <person name="Waki K."/>
            <person name="Watahiki A."/>
            <person name="Okamura-Oho Y."/>
            <person name="Suzuki H."/>
            <person name="Kawai J."/>
            <person name="Hayashizaki Y."/>
        </authorList>
    </citation>
    <scope>NUCLEOTIDE SEQUENCE [LARGE SCALE MRNA]</scope>
    <source>
        <strain>C57BL/6J</strain>
    </source>
</reference>
<reference key="5">
    <citation type="journal article" date="2004" name="Genome Res.">
        <title>The status, quality, and expansion of the NIH full-length cDNA project: the Mammalian Gene Collection (MGC).</title>
        <authorList>
            <consortium name="The MGC Project Team"/>
        </authorList>
    </citation>
    <scope>NUCLEOTIDE SEQUENCE [LARGE SCALE MRNA]</scope>
    <source>
        <strain>C57BL/6J</strain>
        <tissue>Brain</tissue>
    </source>
</reference>
<reference key="6">
    <citation type="journal article" date="2000" name="Genesis">
        <title>Midgestation lethality in mice deficient for the RecA-related gene, Rad51d/Rad51l3.</title>
        <authorList>
            <person name="Pittman D.L."/>
            <person name="Schimenti J.C."/>
        </authorList>
    </citation>
    <scope>DISRUPTION PHENOTYPE</scope>
</reference>
<reference key="7">
    <citation type="journal article" date="2004" name="Cell">
        <title>Telomere maintenance requires the RAD51D recombination/repair protein.</title>
        <authorList>
            <person name="Tarsounas M."/>
            <person name="Munoz P."/>
            <person name="Claas A."/>
            <person name="Smiraldo P.G."/>
            <person name="Pittman D.L."/>
            <person name="Blasco M.A."/>
            <person name="West S.C."/>
        </authorList>
    </citation>
    <scope>FUNCTION</scope>
    <scope>SUBCELLULAR LOCATION</scope>
</reference>
<reference key="8">
    <citation type="journal article" date="2004" name="Nucleic Acids Res.">
        <title>Domain mapping of the Rad51 paralog protein complexes.</title>
        <authorList>
            <person name="Miller K.A."/>
            <person name="Sawicka D."/>
            <person name="Barsky D."/>
            <person name="Albala J.S."/>
        </authorList>
    </citation>
    <scope>INTERACTION WITH RAD51C AND XRCC2</scope>
</reference>
<accession>O55230</accession>
<dbReference type="EMBL" id="AB007040">
    <property type="protein sequence ID" value="BAA24010.1"/>
    <property type="molecule type" value="mRNA"/>
</dbReference>
<dbReference type="EMBL" id="AF034955">
    <property type="protein sequence ID" value="AAC40093.1"/>
    <property type="molecule type" value="mRNA"/>
</dbReference>
<dbReference type="EMBL" id="Y15570">
    <property type="protein sequence ID" value="CAA75679.1"/>
    <property type="molecule type" value="mRNA"/>
</dbReference>
<dbReference type="EMBL" id="AK017835">
    <property type="protein sequence ID" value="BAB30965.1"/>
    <property type="molecule type" value="mRNA"/>
</dbReference>
<dbReference type="EMBL" id="BC049136">
    <property type="protein sequence ID" value="AAH49136.1"/>
    <property type="molecule type" value="mRNA"/>
</dbReference>
<dbReference type="CCDS" id="CCDS36250.1">
    <molecule id="O55230-1"/>
</dbReference>
<dbReference type="RefSeq" id="NP_035365.1">
    <molecule id="O55230-1"/>
    <property type="nucleotide sequence ID" value="NM_011235.4"/>
</dbReference>
<dbReference type="SMR" id="O55230"/>
<dbReference type="BioGRID" id="202567">
    <property type="interactions" value="5"/>
</dbReference>
<dbReference type="FunCoup" id="O55230">
    <property type="interactions" value="2178"/>
</dbReference>
<dbReference type="IntAct" id="O55230">
    <property type="interactions" value="1"/>
</dbReference>
<dbReference type="MINT" id="O55230"/>
<dbReference type="STRING" id="10090.ENSMUSP00000018985"/>
<dbReference type="PhosphoSitePlus" id="O55230"/>
<dbReference type="PaxDb" id="10090-ENSMUSP00000018985"/>
<dbReference type="ProteomicsDB" id="301913">
    <molecule id="O55230-1"/>
</dbReference>
<dbReference type="Pumba" id="O55230"/>
<dbReference type="Antibodypedia" id="15549">
    <property type="antibodies" value="373 antibodies from 34 providers"/>
</dbReference>
<dbReference type="DNASU" id="19364"/>
<dbReference type="Ensembl" id="ENSMUST00000018985.15">
    <molecule id="O55230-1"/>
    <property type="protein sequence ID" value="ENSMUSP00000018985.9"/>
    <property type="gene ID" value="ENSMUSG00000018841.18"/>
</dbReference>
<dbReference type="GeneID" id="19364"/>
<dbReference type="KEGG" id="mmu:19364"/>
<dbReference type="UCSC" id="uc007knm.2">
    <molecule id="O55230-1"/>
    <property type="organism name" value="mouse"/>
</dbReference>
<dbReference type="AGR" id="MGI:1261809"/>
<dbReference type="CTD" id="5892"/>
<dbReference type="MGI" id="MGI:1261809">
    <property type="gene designation" value="Rad51d"/>
</dbReference>
<dbReference type="VEuPathDB" id="HostDB:ENSMUSG00000018841"/>
<dbReference type="eggNOG" id="KOG1433">
    <property type="taxonomic scope" value="Eukaryota"/>
</dbReference>
<dbReference type="GeneTree" id="ENSGT00940000159095"/>
<dbReference type="HOGENOM" id="CLU_058452_0_0_1"/>
<dbReference type="InParanoid" id="O55230"/>
<dbReference type="OMA" id="QRIHTFR"/>
<dbReference type="OrthoDB" id="336321at2759"/>
<dbReference type="PhylomeDB" id="O55230"/>
<dbReference type="TreeFam" id="TF101219"/>
<dbReference type="Reactome" id="R-MMU-5685942">
    <property type="pathway name" value="HDR through Homologous Recombination (HRR)"/>
</dbReference>
<dbReference type="Reactome" id="R-MMU-5693568">
    <property type="pathway name" value="Resolution of D-loop Structures through Holliday Junction Intermediates"/>
</dbReference>
<dbReference type="Reactome" id="R-MMU-5693579">
    <property type="pathway name" value="Homologous DNA Pairing and Strand Exchange"/>
</dbReference>
<dbReference type="Reactome" id="R-MMU-5693616">
    <property type="pathway name" value="Presynaptic phase of homologous DNA pairing and strand exchange"/>
</dbReference>
<dbReference type="BioGRID-ORCS" id="19364">
    <property type="hits" value="24 hits in 116 CRISPR screens"/>
</dbReference>
<dbReference type="ChiTaRS" id="Rad51c">
    <property type="organism name" value="mouse"/>
</dbReference>
<dbReference type="PRO" id="PR:O55230"/>
<dbReference type="Proteomes" id="UP000000589">
    <property type="component" value="Chromosome 11"/>
</dbReference>
<dbReference type="RNAct" id="O55230">
    <property type="molecule type" value="protein"/>
</dbReference>
<dbReference type="Bgee" id="ENSMUSG00000018841">
    <property type="expression patterns" value="Expressed in granulocyte and 240 other cell types or tissues"/>
</dbReference>
<dbReference type="ExpressionAtlas" id="O55230">
    <property type="expression patterns" value="baseline and differential"/>
</dbReference>
<dbReference type="GO" id="GO:0005813">
    <property type="term" value="C:centrosome"/>
    <property type="evidence" value="ECO:0000250"/>
    <property type="project" value="UniProtKB"/>
</dbReference>
<dbReference type="GO" id="GO:0000781">
    <property type="term" value="C:chromosome, telomeric region"/>
    <property type="evidence" value="ECO:0000314"/>
    <property type="project" value="BHF-UCL"/>
</dbReference>
<dbReference type="GO" id="GO:0005737">
    <property type="term" value="C:cytoplasm"/>
    <property type="evidence" value="ECO:0000314"/>
    <property type="project" value="MGI"/>
</dbReference>
<dbReference type="GO" id="GO:0005634">
    <property type="term" value="C:nucleus"/>
    <property type="evidence" value="ECO:0000314"/>
    <property type="project" value="MGI"/>
</dbReference>
<dbReference type="GO" id="GO:0033063">
    <property type="term" value="C:Rad51B-Rad51C-Rad51D-XRCC2 complex"/>
    <property type="evidence" value="ECO:0000250"/>
    <property type="project" value="UniProtKB"/>
</dbReference>
<dbReference type="GO" id="GO:0005657">
    <property type="term" value="C:replication fork"/>
    <property type="evidence" value="ECO:0000250"/>
    <property type="project" value="UniProtKB"/>
</dbReference>
<dbReference type="GO" id="GO:0005524">
    <property type="term" value="F:ATP binding"/>
    <property type="evidence" value="ECO:0007669"/>
    <property type="project" value="UniProtKB-KW"/>
</dbReference>
<dbReference type="GO" id="GO:0016887">
    <property type="term" value="F:ATP hydrolysis activity"/>
    <property type="evidence" value="ECO:0007669"/>
    <property type="project" value="InterPro"/>
</dbReference>
<dbReference type="GO" id="GO:0008094">
    <property type="term" value="F:ATP-dependent activity, acting on DNA"/>
    <property type="evidence" value="ECO:0000250"/>
    <property type="project" value="UniProtKB"/>
</dbReference>
<dbReference type="GO" id="GO:0140664">
    <property type="term" value="F:ATP-dependent DNA damage sensor activity"/>
    <property type="evidence" value="ECO:0007669"/>
    <property type="project" value="Ensembl"/>
</dbReference>
<dbReference type="GO" id="GO:0000400">
    <property type="term" value="F:four-way junction DNA binding"/>
    <property type="evidence" value="ECO:0007669"/>
    <property type="project" value="Ensembl"/>
</dbReference>
<dbReference type="GO" id="GO:0043015">
    <property type="term" value="F:gamma-tubulin binding"/>
    <property type="evidence" value="ECO:0000250"/>
    <property type="project" value="UniProtKB"/>
</dbReference>
<dbReference type="GO" id="GO:0003697">
    <property type="term" value="F:single-stranded DNA binding"/>
    <property type="evidence" value="ECO:0000250"/>
    <property type="project" value="UniProtKB"/>
</dbReference>
<dbReference type="GO" id="GO:0051276">
    <property type="term" value="P:chromosome organization"/>
    <property type="evidence" value="ECO:0000315"/>
    <property type="project" value="MGI"/>
</dbReference>
<dbReference type="GO" id="GO:0006974">
    <property type="term" value="P:DNA damage response"/>
    <property type="evidence" value="ECO:0000315"/>
    <property type="project" value="MGI"/>
</dbReference>
<dbReference type="GO" id="GO:0042148">
    <property type="term" value="P:DNA strand invasion"/>
    <property type="evidence" value="ECO:0000250"/>
    <property type="project" value="UniProtKB"/>
</dbReference>
<dbReference type="GO" id="GO:0000724">
    <property type="term" value="P:double-strand break repair via homologous recombination"/>
    <property type="evidence" value="ECO:0000250"/>
    <property type="project" value="UniProtKB"/>
</dbReference>
<dbReference type="GO" id="GO:0036297">
    <property type="term" value="P:interstrand cross-link repair"/>
    <property type="evidence" value="ECO:0000315"/>
    <property type="project" value="MGI"/>
</dbReference>
<dbReference type="GO" id="GO:0006289">
    <property type="term" value="P:nucleotide-excision repair"/>
    <property type="evidence" value="ECO:0000315"/>
    <property type="project" value="MGI"/>
</dbReference>
<dbReference type="GO" id="GO:0051726">
    <property type="term" value="P:regulation of cell cycle"/>
    <property type="evidence" value="ECO:0000315"/>
    <property type="project" value="MGI"/>
</dbReference>
<dbReference type="GO" id="GO:0000723">
    <property type="term" value="P:telomere maintenance"/>
    <property type="evidence" value="ECO:0000316"/>
    <property type="project" value="BHF-UCL"/>
</dbReference>
<dbReference type="GO" id="GO:0000722">
    <property type="term" value="P:telomere maintenance via recombination"/>
    <property type="evidence" value="ECO:0000250"/>
    <property type="project" value="BHF-UCL"/>
</dbReference>
<dbReference type="CDD" id="cd19489">
    <property type="entry name" value="Rad51D"/>
    <property type="match status" value="1"/>
</dbReference>
<dbReference type="FunFam" id="3.40.50.300:FF:001042">
    <property type="entry name" value="DNA repair protein RAD51 homolog 4"/>
    <property type="match status" value="1"/>
</dbReference>
<dbReference type="Gene3D" id="3.40.50.300">
    <property type="entry name" value="P-loop containing nucleotide triphosphate hydrolases"/>
    <property type="match status" value="1"/>
</dbReference>
<dbReference type="InterPro" id="IPR003593">
    <property type="entry name" value="AAA+_ATPase"/>
</dbReference>
<dbReference type="InterPro" id="IPR013632">
    <property type="entry name" value="DNA_recomb/repair_Rad51_C"/>
</dbReference>
<dbReference type="InterPro" id="IPR016467">
    <property type="entry name" value="DNA_recomb/repair_RecA-like"/>
</dbReference>
<dbReference type="InterPro" id="IPR051988">
    <property type="entry name" value="HRR_RAD51_Paralog"/>
</dbReference>
<dbReference type="InterPro" id="IPR027417">
    <property type="entry name" value="P-loop_NTPase"/>
</dbReference>
<dbReference type="InterPro" id="IPR047323">
    <property type="entry name" value="Rad51D_C"/>
</dbReference>
<dbReference type="InterPro" id="IPR048943">
    <property type="entry name" value="RAD51D_N"/>
</dbReference>
<dbReference type="InterPro" id="IPR020588">
    <property type="entry name" value="RecA_ATP-bd"/>
</dbReference>
<dbReference type="PANTHER" id="PTHR46457">
    <property type="entry name" value="DNA REPAIR PROTEIN RAD51 HOMOLOG 4"/>
    <property type="match status" value="1"/>
</dbReference>
<dbReference type="PANTHER" id="PTHR46457:SF1">
    <property type="entry name" value="DNA REPAIR PROTEIN RAD51 HOMOLOG 4"/>
    <property type="match status" value="1"/>
</dbReference>
<dbReference type="Pfam" id="PF08423">
    <property type="entry name" value="Rad51"/>
    <property type="match status" value="1"/>
</dbReference>
<dbReference type="Pfam" id="PF21794">
    <property type="entry name" value="RAD51D_N"/>
    <property type="match status" value="1"/>
</dbReference>
<dbReference type="PIRSF" id="PIRSF005856">
    <property type="entry name" value="Rad51"/>
    <property type="match status" value="1"/>
</dbReference>
<dbReference type="SMART" id="SM00382">
    <property type="entry name" value="AAA"/>
    <property type="match status" value="1"/>
</dbReference>
<dbReference type="SUPFAM" id="SSF52540">
    <property type="entry name" value="P-loop containing nucleoside triphosphate hydrolases"/>
    <property type="match status" value="1"/>
</dbReference>
<dbReference type="PROSITE" id="PS50162">
    <property type="entry name" value="RECA_2"/>
    <property type="match status" value="1"/>
</dbReference>
<comment type="function">
    <text evidence="2 6">Involved in the homologous recombination repair (HRR) pathway of double-stranded DNA breaks arising during DNA replication or induced by DNA-damaging agents. Bind to single-stranded DNA (ssDNA) and has DNA-dependent ATPase activity. Part of the RAD51 paralog protein complex BCDX2 which acts in the BRCA1-BRCA2-dependent HR pathway. Upon DNA damage, BCDX2 acts downstream of BRCA2 recruitment and upstream of RAD51 recruitment. BCDX2 binds predominantly to the intersection of the four duplex arms of the Holliday junction and to junction of replication forks. The BCDX2 complex was originally reported to bind single-stranded DNA, single-stranded gaps in duplex DNA and specifically to nicks in duplex DNA. Involved in telomere maintenance. The BCDX2 subcomplex XRCC2:RAD51D can stimulate Holliday junction resolution by BLM (By similarity).</text>
</comment>
<comment type="subunit">
    <text evidence="1">Part of the BCDX2 complex consisting of RAD51B, RAD51C, RAD51D and XRCC2; the complex has a ring-like structure arranged into a flat disc around a central channel. In the absence of DNA, the BCDX2 subcomplex XRCC2:RAD51D formed a multimeric ring structure; in the presence of single-stranded DNA it formed a filamentous structure with the ssDNA. Interacts with SWSAP1 and ZSWIM7; involved in homologous recombination repair. Interacts with BLM; required for stimulation of BLM activity by the BCDX2 subcomplex XRCC2:RAD51D (By similarity).</text>
</comment>
<comment type="subcellular location">
    <subcellularLocation>
        <location evidence="1">Nucleus</location>
    </subcellularLocation>
    <subcellularLocation>
        <location evidence="6">Chromosome</location>
        <location evidence="6">Telomere</location>
    </subcellularLocation>
</comment>
<comment type="alternative products">
    <event type="alternative splicing"/>
    <isoform>
        <id>O55230-1</id>
        <name>1</name>
        <sequence type="displayed"/>
    </isoform>
    <text>At least 2 isoforms are produced.</text>
</comment>
<comment type="tissue specificity">
    <text>Highly expressed in brain followed by testis. Also expressed in heart, liver, kidney, spleen, lung and skeletal muscle.</text>
</comment>
<comment type="disruption phenotype">
    <text evidence="4">Midgestation lethal.</text>
</comment>
<comment type="similarity">
    <text evidence="7">Belongs to the RecA family. RAD51 subfamily.</text>
</comment>
<gene>
    <name type="primary">Rad51d</name>
    <name type="synonym">R51h3</name>
    <name type="synonym">Rad51l3</name>
</gene>
<keyword id="KW-0025">Alternative splicing</keyword>
<keyword id="KW-0067">ATP-binding</keyword>
<keyword id="KW-0158">Chromosome</keyword>
<keyword id="KW-0227">DNA damage</keyword>
<keyword id="KW-0233">DNA recombination</keyword>
<keyword id="KW-0234">DNA repair</keyword>
<keyword id="KW-0238">DNA-binding</keyword>
<keyword id="KW-0547">Nucleotide-binding</keyword>
<keyword id="KW-0539">Nucleus</keyword>
<keyword id="KW-1185">Reference proteome</keyword>
<keyword id="KW-0779">Telomere</keyword>